<dbReference type="EC" id="4.2.3.5" evidence="1"/>
<dbReference type="EMBL" id="BX248357">
    <property type="protein sequence ID" value="CAE49873.1"/>
    <property type="molecule type" value="Genomic_DNA"/>
</dbReference>
<dbReference type="RefSeq" id="WP_010934993.1">
    <property type="nucleotide sequence ID" value="NC_002935.2"/>
</dbReference>
<dbReference type="SMR" id="Q6NH02"/>
<dbReference type="STRING" id="257309.DIP1345"/>
<dbReference type="KEGG" id="cdi:DIP1345"/>
<dbReference type="HOGENOM" id="CLU_034547_2_0_11"/>
<dbReference type="UniPathway" id="UPA00053">
    <property type="reaction ID" value="UER00090"/>
</dbReference>
<dbReference type="Proteomes" id="UP000002198">
    <property type="component" value="Chromosome"/>
</dbReference>
<dbReference type="GO" id="GO:0005829">
    <property type="term" value="C:cytosol"/>
    <property type="evidence" value="ECO:0007669"/>
    <property type="project" value="TreeGrafter"/>
</dbReference>
<dbReference type="GO" id="GO:0004107">
    <property type="term" value="F:chorismate synthase activity"/>
    <property type="evidence" value="ECO:0007669"/>
    <property type="project" value="UniProtKB-UniRule"/>
</dbReference>
<dbReference type="GO" id="GO:0010181">
    <property type="term" value="F:FMN binding"/>
    <property type="evidence" value="ECO:0007669"/>
    <property type="project" value="TreeGrafter"/>
</dbReference>
<dbReference type="GO" id="GO:0008652">
    <property type="term" value="P:amino acid biosynthetic process"/>
    <property type="evidence" value="ECO:0007669"/>
    <property type="project" value="UniProtKB-KW"/>
</dbReference>
<dbReference type="GO" id="GO:0009073">
    <property type="term" value="P:aromatic amino acid family biosynthetic process"/>
    <property type="evidence" value="ECO:0007669"/>
    <property type="project" value="UniProtKB-KW"/>
</dbReference>
<dbReference type="GO" id="GO:0009423">
    <property type="term" value="P:chorismate biosynthetic process"/>
    <property type="evidence" value="ECO:0007669"/>
    <property type="project" value="UniProtKB-UniRule"/>
</dbReference>
<dbReference type="CDD" id="cd07304">
    <property type="entry name" value="Chorismate_synthase"/>
    <property type="match status" value="1"/>
</dbReference>
<dbReference type="FunFam" id="3.60.150.10:FF:000002">
    <property type="entry name" value="Chorismate synthase"/>
    <property type="match status" value="1"/>
</dbReference>
<dbReference type="Gene3D" id="3.60.150.10">
    <property type="entry name" value="Chorismate synthase AroC"/>
    <property type="match status" value="1"/>
</dbReference>
<dbReference type="HAMAP" id="MF_00300">
    <property type="entry name" value="Chorismate_synth"/>
    <property type="match status" value="1"/>
</dbReference>
<dbReference type="InterPro" id="IPR000453">
    <property type="entry name" value="Chorismate_synth"/>
</dbReference>
<dbReference type="InterPro" id="IPR035904">
    <property type="entry name" value="Chorismate_synth_AroC_sf"/>
</dbReference>
<dbReference type="InterPro" id="IPR020541">
    <property type="entry name" value="Chorismate_synthase_CS"/>
</dbReference>
<dbReference type="NCBIfam" id="TIGR00033">
    <property type="entry name" value="aroC"/>
    <property type="match status" value="1"/>
</dbReference>
<dbReference type="NCBIfam" id="NF003793">
    <property type="entry name" value="PRK05382.1"/>
    <property type="match status" value="1"/>
</dbReference>
<dbReference type="PANTHER" id="PTHR21085">
    <property type="entry name" value="CHORISMATE SYNTHASE"/>
    <property type="match status" value="1"/>
</dbReference>
<dbReference type="PANTHER" id="PTHR21085:SF0">
    <property type="entry name" value="CHORISMATE SYNTHASE"/>
    <property type="match status" value="1"/>
</dbReference>
<dbReference type="Pfam" id="PF01264">
    <property type="entry name" value="Chorismate_synt"/>
    <property type="match status" value="1"/>
</dbReference>
<dbReference type="PIRSF" id="PIRSF001456">
    <property type="entry name" value="Chorismate_synth"/>
    <property type="match status" value="1"/>
</dbReference>
<dbReference type="SUPFAM" id="SSF103263">
    <property type="entry name" value="Chorismate synthase, AroC"/>
    <property type="match status" value="1"/>
</dbReference>
<dbReference type="PROSITE" id="PS00787">
    <property type="entry name" value="CHORISMATE_SYNTHASE_1"/>
    <property type="match status" value="1"/>
</dbReference>
<dbReference type="PROSITE" id="PS00788">
    <property type="entry name" value="CHORISMATE_SYNTHASE_2"/>
    <property type="match status" value="1"/>
</dbReference>
<dbReference type="PROSITE" id="PS00789">
    <property type="entry name" value="CHORISMATE_SYNTHASE_3"/>
    <property type="match status" value="1"/>
</dbReference>
<feature type="chain" id="PRO_0000140577" description="Chorismate synthase">
    <location>
        <begin position="1"/>
        <end position="403"/>
    </location>
</feature>
<feature type="binding site" evidence="1">
    <location>
        <position position="40"/>
    </location>
    <ligand>
        <name>NADP(+)</name>
        <dbReference type="ChEBI" id="CHEBI:58349"/>
    </ligand>
</feature>
<feature type="binding site" evidence="1">
    <location>
        <position position="46"/>
    </location>
    <ligand>
        <name>NADP(+)</name>
        <dbReference type="ChEBI" id="CHEBI:58349"/>
    </ligand>
</feature>
<feature type="binding site" evidence="1">
    <location>
        <begin position="140"/>
        <end position="142"/>
    </location>
    <ligand>
        <name>FMN</name>
        <dbReference type="ChEBI" id="CHEBI:58210"/>
    </ligand>
</feature>
<feature type="binding site" evidence="1">
    <location>
        <begin position="261"/>
        <end position="262"/>
    </location>
    <ligand>
        <name>FMN</name>
        <dbReference type="ChEBI" id="CHEBI:58210"/>
    </ligand>
</feature>
<feature type="binding site" evidence="1">
    <location>
        <position position="305"/>
    </location>
    <ligand>
        <name>FMN</name>
        <dbReference type="ChEBI" id="CHEBI:58210"/>
    </ligand>
</feature>
<feature type="binding site" evidence="1">
    <location>
        <begin position="320"/>
        <end position="324"/>
    </location>
    <ligand>
        <name>FMN</name>
        <dbReference type="ChEBI" id="CHEBI:58210"/>
    </ligand>
</feature>
<feature type="binding site" evidence="1">
    <location>
        <position position="346"/>
    </location>
    <ligand>
        <name>FMN</name>
        <dbReference type="ChEBI" id="CHEBI:58210"/>
    </ligand>
</feature>
<keyword id="KW-0028">Amino-acid biosynthesis</keyword>
<keyword id="KW-0057">Aromatic amino acid biosynthesis</keyword>
<keyword id="KW-0274">FAD</keyword>
<keyword id="KW-0285">Flavoprotein</keyword>
<keyword id="KW-0288">FMN</keyword>
<keyword id="KW-0456">Lyase</keyword>
<keyword id="KW-0521">NADP</keyword>
<keyword id="KW-1185">Reference proteome</keyword>
<name>AROC_CORDI</name>
<evidence type="ECO:0000255" key="1">
    <source>
        <dbReference type="HAMAP-Rule" id="MF_00300"/>
    </source>
</evidence>
<reference key="1">
    <citation type="journal article" date="2003" name="Nucleic Acids Res.">
        <title>The complete genome sequence and analysis of Corynebacterium diphtheriae NCTC13129.</title>
        <authorList>
            <person name="Cerdeno-Tarraga A.-M."/>
            <person name="Efstratiou A."/>
            <person name="Dover L.G."/>
            <person name="Holden M.T.G."/>
            <person name="Pallen M.J."/>
            <person name="Bentley S.D."/>
            <person name="Besra G.S."/>
            <person name="Churcher C.M."/>
            <person name="James K.D."/>
            <person name="De Zoysa A."/>
            <person name="Chillingworth T."/>
            <person name="Cronin A."/>
            <person name="Dowd L."/>
            <person name="Feltwell T."/>
            <person name="Hamlin N."/>
            <person name="Holroyd S."/>
            <person name="Jagels K."/>
            <person name="Moule S."/>
            <person name="Quail M.A."/>
            <person name="Rabbinowitsch E."/>
            <person name="Rutherford K.M."/>
            <person name="Thomson N.R."/>
            <person name="Unwin L."/>
            <person name="Whitehead S."/>
            <person name="Barrell B.G."/>
            <person name="Parkhill J."/>
        </authorList>
    </citation>
    <scope>NUCLEOTIDE SEQUENCE [LARGE SCALE GENOMIC DNA]</scope>
    <source>
        <strain>ATCC 700971 / NCTC 13129 / Biotype gravis</strain>
    </source>
</reference>
<comment type="function">
    <text evidence="1">Catalyzes the anti-1,4-elimination of the C-3 phosphate and the C-6 proR hydrogen from 5-enolpyruvylshikimate-3-phosphate (EPSP) to yield chorismate, which is the branch point compound that serves as the starting substrate for the three terminal pathways of aromatic amino acid biosynthesis. This reaction introduces a second double bond into the aromatic ring system.</text>
</comment>
<comment type="catalytic activity">
    <reaction evidence="1">
        <text>5-O-(1-carboxyvinyl)-3-phosphoshikimate = chorismate + phosphate</text>
        <dbReference type="Rhea" id="RHEA:21020"/>
        <dbReference type="ChEBI" id="CHEBI:29748"/>
        <dbReference type="ChEBI" id="CHEBI:43474"/>
        <dbReference type="ChEBI" id="CHEBI:57701"/>
        <dbReference type="EC" id="4.2.3.5"/>
    </reaction>
</comment>
<comment type="cofactor">
    <cofactor evidence="1">
        <name>FMNH2</name>
        <dbReference type="ChEBI" id="CHEBI:57618"/>
    </cofactor>
    <text evidence="1">Reduced FMN (FMNH(2)).</text>
</comment>
<comment type="pathway">
    <text evidence="1">Metabolic intermediate biosynthesis; chorismate biosynthesis; chorismate from D-erythrose 4-phosphate and phosphoenolpyruvate: step 7/7.</text>
</comment>
<comment type="subunit">
    <text evidence="1">Homotetramer.</text>
</comment>
<comment type="similarity">
    <text evidence="1">Belongs to the chorismate synthase family.</text>
</comment>
<organism>
    <name type="scientific">Corynebacterium diphtheriae (strain ATCC 700971 / NCTC 13129 / Biotype gravis)</name>
    <dbReference type="NCBI Taxonomy" id="257309"/>
    <lineage>
        <taxon>Bacteria</taxon>
        <taxon>Bacillati</taxon>
        <taxon>Actinomycetota</taxon>
        <taxon>Actinomycetes</taxon>
        <taxon>Mycobacteriales</taxon>
        <taxon>Corynebacteriaceae</taxon>
        <taxon>Corynebacterium</taxon>
    </lineage>
</organism>
<accession>Q6NH02</accession>
<protein>
    <recommendedName>
        <fullName evidence="1">Chorismate synthase</fullName>
        <shortName evidence="1">CS</shortName>
        <ecNumber evidence="1">4.2.3.5</ecNumber>
    </recommendedName>
    <alternativeName>
        <fullName evidence="1">5-enolpyruvylshikimate-3-phosphate phospholyase</fullName>
    </alternativeName>
</protein>
<proteinExistence type="inferred from homology"/>
<gene>
    <name evidence="1" type="primary">aroC</name>
    <name type="ordered locus">DIP1345</name>
</gene>
<sequence>MLRWTTAGESHGQALIAMLEHMPAGVPISREEISFQLGRRRLGFGRGARMKFEADEVSILGGVRHGYTIGSPIAIMVGNTEWPKWTTIMSADAIDESDPDVAAAMSSGRGARLTRPRPGHADFAGMVKYNHDEARPILERSSARETAARVAAATVARSFLRETLGVEVFSHVISIGRSEIDQTVCPTFEDLGRIDDSPVRSASAQAEASMIDQINAAKKQGDTLGGIVEVIVNGLPIGLGSHISGEDRLDAQLAAALMGIQAIKGVEIGDGFEEARRLGSEAHDEIVLRDGVVARQSNRAGGIEGGMTNGESLRVRAAMKPISTVPRALQSIDMDSGKRATGIHQRSDVCAVPAAGVVAEAMVALVLARAVLEKFGGDSLAETKRNIAAYNEYVKTRIAFDGE</sequence>